<evidence type="ECO:0000250" key="1">
    <source>
        <dbReference type="UniProtKB" id="P02942"/>
    </source>
</evidence>
<evidence type="ECO:0000255" key="2"/>
<evidence type="ECO:0000255" key="3">
    <source>
        <dbReference type="PROSITE-ProRule" id="PRU00284"/>
    </source>
</evidence>
<evidence type="ECO:0000269" key="4">
    <source>
    </source>
</evidence>
<evidence type="ECO:0000269" key="5">
    <source>
    </source>
</evidence>
<evidence type="ECO:0000269" key="6">
    <source>
    </source>
</evidence>
<evidence type="ECO:0000303" key="7">
    <source>
    </source>
</evidence>
<evidence type="ECO:0000305" key="8"/>
<evidence type="ECO:0000305" key="9">
    <source>
    </source>
</evidence>
<evidence type="ECO:0000305" key="10">
    <source>
    </source>
</evidence>
<accession>Q2W8M7</accession>
<sequence length="436" mass="44582">METTLGSYARTLSLGMLVPSAICLLAGTFGLLGGSSIALWVVIAVSLLGVVGGVKIGGSARRMAGDLSTAIHVLSRSASGDLNARILDVRGSGGIGALQHSINRLLDLAEAFGKEAFAAVESANHGRYYRRIITTGLRGDFVLYAKTINQALKRMEARDAEFIAFANNQVKPVVNAVAAAATELEASSGAMSAQSTDTSHQAMTVAAAAEQASVNVQAVASAVEEFSASIKEISTQVHRAAAVASEAAGVASRTDTTVHGLSDAAQRIGAIVSLINDIAAQTNLLALNATIEAARAGDAGKGFAVVANEVKNLANQTARATEDITSQVAHIQEVAAEAIKAIQEITRTVSQIEETSSAVAGAVEEQNAVTVEIARNVAEAATGTSSVSSAIITVQATAAEATESAGQVADAASELSRQSENLSREVDGFIARIGGR</sequence>
<comment type="function">
    <text evidence="5 10">Probable methyl-accepting taxis protein. May be the receptor that senses the torque generated from the interaction between the magnetosome dipole moment and the external magnetic field (Probable). Overproduction interferes with magnetotaxis, cells respond more slowly to changes in the magnetic field; requires the MamK-interacting C-terminus of the protein. The effect of magnetic sensing is to control flagellar rotation (PubMed:20471399).</text>
</comment>
<comment type="function">
    <text evidence="8">Chemotactic-signal transducers respond to changes in the concentration of attractants and repellents in the environment, transduce a signal from the outside to the inside of the cell, and facilitate sensory adaptation through variation of methylation levels. Attractants increase the level of methylation while repellents decrease the level of methylation.</text>
</comment>
<comment type="subunit">
    <text evidence="5">Interacts with MamK at cell poles and septa.</text>
</comment>
<comment type="subcellular location">
    <subcellularLocation>
        <location evidence="9">Cell inner membrane</location>
        <topology evidence="2">Multi-pass membrane protein</topology>
    </subcellularLocation>
    <text evidence="5">Found predominantly at cell poles or at septa where divison occurs.</text>
</comment>
<comment type="domain">
    <text evidence="5">Only the C-terminus (residues 321-436) is necessary to interact with MamK; its addition to MCP25 confers the ability to interact with MamK.</text>
</comment>
<comment type="disruption phenotype">
    <text evidence="6">A double amb0994-amb0995 deletion grows normally and has wild-type magnetosomes. It fails to sense and respond to an external magnetic field, i.e. bacteria do not align to the field.</text>
</comment>
<comment type="miscellaneous">
    <text evidence="8">This bacteria makes up to 20 cubo-octahedral magnetosomes of about 45 nm in diameter which contain membrane-bound crystals of magnetite (Fe(3)O(4)).</text>
</comment>
<comment type="miscellaneous">
    <text evidence="4">There are over 60 methyl-accepting chemotaxis proteins in this bacterium.</text>
</comment>
<comment type="similarity">
    <text evidence="8">Belongs to the methyl-accepting chemotaxis (MCP) protein family.</text>
</comment>
<reference key="1">
    <citation type="journal article" date="2005" name="DNA Res.">
        <title>Complete genome sequence of the facultative anaerobic magnetotactic bacterium Magnetospirillum sp. strain AMB-1.</title>
        <authorList>
            <person name="Matsunaga T."/>
            <person name="Okamura Y."/>
            <person name="Fukuda Y."/>
            <person name="Wahyudi A.T."/>
            <person name="Murase Y."/>
            <person name="Takeyama H."/>
        </authorList>
    </citation>
    <scope>NUCLEOTIDE SEQUENCE [LARGE SCALE GENOMIC DNA]</scope>
    <source>
        <strain>ATCC 700264 / AMB-1</strain>
    </source>
</reference>
<reference key="2">
    <citation type="journal article" date="2010" name="J. Mol. Biol.">
        <title>An MCP-like protein interacts with the MamK cytoskeleton and is involved in magnetotaxis in Magnetospirillum magneticum AMB-1.</title>
        <authorList>
            <person name="Philippe N."/>
            <person name="Wu L.F."/>
        </authorList>
    </citation>
    <scope>FUNCTION</scope>
    <scope>INTERACTION WITH MAMK</scope>
    <scope>SUBCELLULAR LOCATION</scope>
    <scope>DOMAIN</scope>
    <scope>POSSIBLE METHYLATION AT GLU-225</scope>
    <source>
        <strain>ATCC 700264 / AMB-1</strain>
    </source>
</reference>
<reference key="3">
    <citation type="journal article" date="2014" name="Integr. Biol. (Camb.)">
        <title>Angle sensing in magnetotaxis of Magnetospirillum magneticum AMB-1.</title>
        <authorList>
            <person name="Zhu X."/>
            <person name="Ge X."/>
            <person name="Li N."/>
            <person name="Wu L.F."/>
            <person name="Luo C."/>
            <person name="Ouyang Q."/>
            <person name="Tu Y."/>
            <person name="Chen G."/>
        </authorList>
    </citation>
    <scope>FUNCTION</scope>
    <scope>DISRUPTION PHENOTYPE</scope>
    <source>
        <strain>ATCC 700264 / AMB-1</strain>
    </source>
</reference>
<keyword id="KW-0091">Biomineralization</keyword>
<keyword id="KW-0997">Cell inner membrane</keyword>
<keyword id="KW-1003">Cell membrane</keyword>
<keyword id="KW-0472">Membrane</keyword>
<keyword id="KW-0488">Methylation</keyword>
<keyword id="KW-0807">Transducer</keyword>
<keyword id="KW-0812">Transmembrane</keyword>
<keyword id="KW-1133">Transmembrane helix</keyword>
<gene>
    <name type="ordered locus">amb0994</name>
</gene>
<dbReference type="EMBL" id="AP007255">
    <property type="protein sequence ID" value="BAE49798.1"/>
    <property type="molecule type" value="Genomic_DNA"/>
</dbReference>
<dbReference type="RefSeq" id="WP_011383420.1">
    <property type="nucleotide sequence ID" value="NC_007626.1"/>
</dbReference>
<dbReference type="SMR" id="Q2W8M7"/>
<dbReference type="STRING" id="342108.amb0994"/>
<dbReference type="KEGG" id="mag:amb0994"/>
<dbReference type="HOGENOM" id="CLU_000445_107_27_5"/>
<dbReference type="OrthoDB" id="5179380at2"/>
<dbReference type="Proteomes" id="UP000007058">
    <property type="component" value="Chromosome"/>
</dbReference>
<dbReference type="GO" id="GO:0060187">
    <property type="term" value="C:cell pole"/>
    <property type="evidence" value="ECO:0000314"/>
    <property type="project" value="UniProtKB"/>
</dbReference>
<dbReference type="GO" id="GO:0005886">
    <property type="term" value="C:plasma membrane"/>
    <property type="evidence" value="ECO:0007669"/>
    <property type="project" value="UniProtKB-SubCell"/>
</dbReference>
<dbReference type="GO" id="GO:0071000">
    <property type="term" value="P:response to magnetism"/>
    <property type="evidence" value="ECO:0000315"/>
    <property type="project" value="UniProtKB"/>
</dbReference>
<dbReference type="GO" id="GO:0007165">
    <property type="term" value="P:signal transduction"/>
    <property type="evidence" value="ECO:0007669"/>
    <property type="project" value="UniProtKB-KW"/>
</dbReference>
<dbReference type="Gene3D" id="1.10.287.950">
    <property type="entry name" value="Methyl-accepting chemotaxis protein"/>
    <property type="match status" value="1"/>
</dbReference>
<dbReference type="InterPro" id="IPR004089">
    <property type="entry name" value="MCPsignal_dom"/>
</dbReference>
<dbReference type="PANTHER" id="PTHR32089:SF112">
    <property type="entry name" value="LYSOZYME-LIKE PROTEIN-RELATED"/>
    <property type="match status" value="1"/>
</dbReference>
<dbReference type="PANTHER" id="PTHR32089">
    <property type="entry name" value="METHYL-ACCEPTING CHEMOTAXIS PROTEIN MCPB"/>
    <property type="match status" value="1"/>
</dbReference>
<dbReference type="Pfam" id="PF00015">
    <property type="entry name" value="MCPsignal"/>
    <property type="match status" value="1"/>
</dbReference>
<dbReference type="SMART" id="SM00283">
    <property type="entry name" value="MA"/>
    <property type="match status" value="1"/>
</dbReference>
<dbReference type="SUPFAM" id="SSF58104">
    <property type="entry name" value="Methyl-accepting chemotaxis protein (MCP) signaling domain"/>
    <property type="match status" value="1"/>
</dbReference>
<dbReference type="PROSITE" id="PS50111">
    <property type="entry name" value="CHEMOTAXIS_TRANSDUC_2"/>
    <property type="match status" value="1"/>
</dbReference>
<organism>
    <name type="scientific">Paramagnetospirillum magneticum (strain ATCC 700264 / AMB-1)</name>
    <name type="common">Magnetospirillum magneticum</name>
    <dbReference type="NCBI Taxonomy" id="342108"/>
    <lineage>
        <taxon>Bacteria</taxon>
        <taxon>Pseudomonadati</taxon>
        <taxon>Pseudomonadota</taxon>
        <taxon>Alphaproteobacteria</taxon>
        <taxon>Rhodospirillales</taxon>
        <taxon>Magnetospirillaceae</taxon>
        <taxon>Paramagnetospirillum</taxon>
    </lineage>
</organism>
<feature type="chain" id="PRO_0000447748" description="Methyl-accepting chemotaxis protein Amb0994">
    <location>
        <begin position="1"/>
        <end position="436"/>
    </location>
</feature>
<feature type="topological domain" description="Cytoplasmic" evidence="8">
    <location>
        <begin position="1"/>
        <end position="8"/>
    </location>
</feature>
<feature type="transmembrane region" description="Helical" evidence="2">
    <location>
        <begin position="9"/>
        <end position="29"/>
    </location>
</feature>
<feature type="topological domain" description="Periplasmic" evidence="8">
    <location>
        <position position="30"/>
    </location>
</feature>
<feature type="transmembrane region" description="Helical" evidence="2">
    <location>
        <begin position="31"/>
        <end position="51"/>
    </location>
</feature>
<feature type="topological domain" description="Cytoplasmic" evidence="8">
    <location>
        <begin position="52"/>
        <end position="436"/>
    </location>
</feature>
<feature type="domain" description="Methyl-accepting transducer" evidence="3">
    <location>
        <begin position="180"/>
        <end position="416"/>
    </location>
</feature>
<feature type="region of interest" description="Required for interaction with MamK and to respond to the magnetic field" evidence="5">
    <location>
        <begin position="321"/>
        <end position="436"/>
    </location>
</feature>
<feature type="modified residue" description="Glutamate methyl ester (Gln)" evidence="1">
    <location>
        <position position="211"/>
    </location>
</feature>
<feature type="modified residue" description="Glutamate methyl ester (Glu)" evidence="9">
    <location>
        <position position="225"/>
    </location>
</feature>
<protein>
    <recommendedName>
        <fullName evidence="7">Methyl-accepting chemotaxis protein Amb0994</fullName>
    </recommendedName>
    <alternativeName>
        <fullName evidence="8">Putative torque-sensing protein Amb0994</fullName>
    </alternativeName>
</protein>
<name>MCP10_PARM1</name>
<proteinExistence type="evidence at protein level"/>